<dbReference type="EMBL" id="AM920435">
    <property type="protein sequence ID" value="CAP86804.1"/>
    <property type="molecule type" value="Genomic_DNA"/>
</dbReference>
<dbReference type="RefSeq" id="XP_002563950.1">
    <property type="nucleotide sequence ID" value="XM_002563904.1"/>
</dbReference>
<dbReference type="SMR" id="B6HDT2"/>
<dbReference type="STRING" id="500485.B6HDT2"/>
<dbReference type="GeneID" id="8315652"/>
<dbReference type="KEGG" id="pcs:N7525_009850"/>
<dbReference type="VEuPathDB" id="FungiDB:PCH_Pc20g14750"/>
<dbReference type="eggNOG" id="ENOG502S7IA">
    <property type="taxonomic scope" value="Eukaryota"/>
</dbReference>
<dbReference type="HOGENOM" id="CLU_047598_3_0_1"/>
<dbReference type="OMA" id="HAKAPEQ"/>
<dbReference type="OrthoDB" id="5578174at2759"/>
<dbReference type="BioCyc" id="PCHR:PC20G14750-MONOMER"/>
<dbReference type="Proteomes" id="UP000000724">
    <property type="component" value="Contig Pc00c20"/>
</dbReference>
<dbReference type="GO" id="GO:0005739">
    <property type="term" value="C:mitochondrion"/>
    <property type="evidence" value="ECO:0007669"/>
    <property type="project" value="UniProtKB-SubCell"/>
</dbReference>
<dbReference type="GO" id="GO:0005634">
    <property type="term" value="C:nucleus"/>
    <property type="evidence" value="ECO:0007669"/>
    <property type="project" value="TreeGrafter"/>
</dbReference>
<dbReference type="InterPro" id="IPR010487">
    <property type="entry name" value="NGRN/Rrg9"/>
</dbReference>
<dbReference type="PANTHER" id="PTHR13475">
    <property type="entry name" value="NEUGRIN"/>
    <property type="match status" value="1"/>
</dbReference>
<dbReference type="PANTHER" id="PTHR13475:SF3">
    <property type="entry name" value="NEUGRIN"/>
    <property type="match status" value="1"/>
</dbReference>
<dbReference type="Pfam" id="PF06413">
    <property type="entry name" value="Neugrin"/>
    <property type="match status" value="1"/>
</dbReference>
<comment type="function">
    <text evidence="1">Required for respiratory activity and maintenance and expression of the mitochondrial genome.</text>
</comment>
<comment type="subcellular location">
    <subcellularLocation>
        <location evidence="1">Mitochondrion</location>
    </subcellularLocation>
</comment>
<comment type="similarity">
    <text evidence="4">Belongs to the RRG9 family.</text>
</comment>
<protein>
    <recommendedName>
        <fullName>Required for respiratory growth protein 9, mitochondrial</fullName>
    </recommendedName>
</protein>
<name>RRG9_PENRW</name>
<proteinExistence type="inferred from homology"/>
<feature type="transit peptide" description="Mitochondrion" evidence="2">
    <location>
        <begin position="1"/>
        <end position="54"/>
    </location>
</feature>
<feature type="chain" id="PRO_5000409509" description="Required for respiratory growth protein 9, mitochondrial">
    <location>
        <begin position="55"/>
        <end position="288"/>
    </location>
</feature>
<feature type="region of interest" description="Disordered" evidence="3">
    <location>
        <begin position="58"/>
        <end position="168"/>
    </location>
</feature>
<feature type="compositionally biased region" description="Basic and acidic residues" evidence="3">
    <location>
        <begin position="112"/>
        <end position="168"/>
    </location>
</feature>
<reference key="1">
    <citation type="journal article" date="2008" name="Nat. Biotechnol.">
        <title>Genome sequencing and analysis of the filamentous fungus Penicillium chrysogenum.</title>
        <authorList>
            <person name="van den Berg M.A."/>
            <person name="Albang R."/>
            <person name="Albermann K."/>
            <person name="Badger J.H."/>
            <person name="Daran J.-M."/>
            <person name="Driessen A.J.M."/>
            <person name="Garcia-Estrada C."/>
            <person name="Fedorova N.D."/>
            <person name="Harris D.M."/>
            <person name="Heijne W.H.M."/>
            <person name="Joardar V.S."/>
            <person name="Kiel J.A.K.W."/>
            <person name="Kovalchuk A."/>
            <person name="Martin J.F."/>
            <person name="Nierman W.C."/>
            <person name="Nijland J.G."/>
            <person name="Pronk J.T."/>
            <person name="Roubos J.A."/>
            <person name="van der Klei I.J."/>
            <person name="van Peij N.N.M.E."/>
            <person name="Veenhuis M."/>
            <person name="von Doehren H."/>
            <person name="Wagner C."/>
            <person name="Wortman J.R."/>
            <person name="Bovenberg R.A.L."/>
        </authorList>
    </citation>
    <scope>NUCLEOTIDE SEQUENCE [LARGE SCALE GENOMIC DNA]</scope>
    <source>
        <strain>ATCC 28089 / DSM 1075 / NRRL 1951 / Wisconsin 54-1255</strain>
    </source>
</reference>
<gene>
    <name type="primary">rrg9</name>
    <name type="ORF">Pc20g14750</name>
</gene>
<sequence length="288" mass="33390">MTKCAASSRLALSAVLRNVFHSQSSKLGASITPYRRPFASVPLFSSDIQLQRSFGSMPRLCDSQNEQPEPAVPGTLTVADDTLPSQHKTTKRKDYDSSGKTDGWNTHKRQPKDHGGNPENRTGRTDRERRAFRNETRREAKKEPRKWQDRTEKVKLFSENKGNKKPEHWQVQKAALKEKFAGGWNPPKKLSPDALDGIRHLHAKAPEQFTTAVLAQEFEVSPEAIRRILKSKWRPSEDEMESRRKRWENRHDRIWSRMAELGLRPSTNRTRTLSDFHVLYDDNNRKRR</sequence>
<evidence type="ECO:0000250" key="1"/>
<evidence type="ECO:0000255" key="2"/>
<evidence type="ECO:0000256" key="3">
    <source>
        <dbReference type="SAM" id="MobiDB-lite"/>
    </source>
</evidence>
<evidence type="ECO:0000305" key="4"/>
<organism>
    <name type="scientific">Penicillium rubens (strain ATCC 28089 / DSM 1075 / NRRL 1951 / Wisconsin 54-1255)</name>
    <name type="common">Penicillium chrysogenum</name>
    <dbReference type="NCBI Taxonomy" id="500485"/>
    <lineage>
        <taxon>Eukaryota</taxon>
        <taxon>Fungi</taxon>
        <taxon>Dikarya</taxon>
        <taxon>Ascomycota</taxon>
        <taxon>Pezizomycotina</taxon>
        <taxon>Eurotiomycetes</taxon>
        <taxon>Eurotiomycetidae</taxon>
        <taxon>Eurotiales</taxon>
        <taxon>Aspergillaceae</taxon>
        <taxon>Penicillium</taxon>
        <taxon>Penicillium chrysogenum species complex</taxon>
    </lineage>
</organism>
<keyword id="KW-0496">Mitochondrion</keyword>
<keyword id="KW-1185">Reference proteome</keyword>
<keyword id="KW-0809">Transit peptide</keyword>
<accession>B6HDT2</accession>